<protein>
    <recommendedName>
        <fullName evidence="2">Translation initiation factor IF-2</fullName>
    </recommendedName>
</protein>
<keyword id="KW-0963">Cytoplasm</keyword>
<keyword id="KW-0342">GTP-binding</keyword>
<keyword id="KW-0396">Initiation factor</keyword>
<keyword id="KW-0547">Nucleotide-binding</keyword>
<keyword id="KW-0648">Protein biosynthesis</keyword>
<organism>
    <name type="scientific">Ehrlichia ruminantium (strain Gardel)</name>
    <dbReference type="NCBI Taxonomy" id="302409"/>
    <lineage>
        <taxon>Bacteria</taxon>
        <taxon>Pseudomonadati</taxon>
        <taxon>Pseudomonadota</taxon>
        <taxon>Alphaproteobacteria</taxon>
        <taxon>Rickettsiales</taxon>
        <taxon>Anaplasmataceae</taxon>
        <taxon>Ehrlichia</taxon>
    </lineage>
</organism>
<proteinExistence type="inferred from homology"/>
<dbReference type="EMBL" id="CR925677">
    <property type="protein sequence ID" value="CAI27933.1"/>
    <property type="molecule type" value="Genomic_DNA"/>
</dbReference>
<dbReference type="RefSeq" id="WP_011255605.1">
    <property type="nucleotide sequence ID" value="NC_006831.1"/>
</dbReference>
<dbReference type="SMR" id="Q5FGX3"/>
<dbReference type="KEGG" id="erg:ERGA_CDS_04810"/>
<dbReference type="HOGENOM" id="CLU_006301_10_2_5"/>
<dbReference type="OrthoDB" id="9811804at2"/>
<dbReference type="Proteomes" id="UP000000533">
    <property type="component" value="Chromosome"/>
</dbReference>
<dbReference type="GO" id="GO:0005737">
    <property type="term" value="C:cytoplasm"/>
    <property type="evidence" value="ECO:0007669"/>
    <property type="project" value="UniProtKB-SubCell"/>
</dbReference>
<dbReference type="GO" id="GO:0005525">
    <property type="term" value="F:GTP binding"/>
    <property type="evidence" value="ECO:0007669"/>
    <property type="project" value="UniProtKB-KW"/>
</dbReference>
<dbReference type="GO" id="GO:0003924">
    <property type="term" value="F:GTPase activity"/>
    <property type="evidence" value="ECO:0007669"/>
    <property type="project" value="UniProtKB-UniRule"/>
</dbReference>
<dbReference type="GO" id="GO:0003743">
    <property type="term" value="F:translation initiation factor activity"/>
    <property type="evidence" value="ECO:0007669"/>
    <property type="project" value="UniProtKB-UniRule"/>
</dbReference>
<dbReference type="CDD" id="cd01887">
    <property type="entry name" value="IF2_eIF5B"/>
    <property type="match status" value="1"/>
</dbReference>
<dbReference type="CDD" id="cd03702">
    <property type="entry name" value="IF2_mtIF2_II"/>
    <property type="match status" value="1"/>
</dbReference>
<dbReference type="CDD" id="cd03692">
    <property type="entry name" value="mtIF2_IVc"/>
    <property type="match status" value="1"/>
</dbReference>
<dbReference type="FunFam" id="2.40.30.10:FF:000008">
    <property type="entry name" value="Translation initiation factor IF-2"/>
    <property type="match status" value="1"/>
</dbReference>
<dbReference type="FunFam" id="2.40.30.10:FF:000054">
    <property type="entry name" value="Translation initiation factor IF-2"/>
    <property type="match status" value="1"/>
</dbReference>
<dbReference type="FunFam" id="3.40.50.10050:FF:000001">
    <property type="entry name" value="Translation initiation factor IF-2"/>
    <property type="match status" value="1"/>
</dbReference>
<dbReference type="FunFam" id="3.40.50.300:FF:000019">
    <property type="entry name" value="Translation initiation factor IF-2"/>
    <property type="match status" value="1"/>
</dbReference>
<dbReference type="Gene3D" id="3.40.50.300">
    <property type="entry name" value="P-loop containing nucleotide triphosphate hydrolases"/>
    <property type="match status" value="1"/>
</dbReference>
<dbReference type="Gene3D" id="2.40.30.10">
    <property type="entry name" value="Translation factors"/>
    <property type="match status" value="2"/>
</dbReference>
<dbReference type="Gene3D" id="3.40.50.10050">
    <property type="entry name" value="Translation initiation factor IF- 2, domain 3"/>
    <property type="match status" value="1"/>
</dbReference>
<dbReference type="HAMAP" id="MF_00100_B">
    <property type="entry name" value="IF_2_B"/>
    <property type="match status" value="1"/>
</dbReference>
<dbReference type="InterPro" id="IPR053905">
    <property type="entry name" value="EF-G-like_DII"/>
</dbReference>
<dbReference type="InterPro" id="IPR044145">
    <property type="entry name" value="IF2_II"/>
</dbReference>
<dbReference type="InterPro" id="IPR006847">
    <property type="entry name" value="IF2_N"/>
</dbReference>
<dbReference type="InterPro" id="IPR027417">
    <property type="entry name" value="P-loop_NTPase"/>
</dbReference>
<dbReference type="InterPro" id="IPR005225">
    <property type="entry name" value="Small_GTP-bd"/>
</dbReference>
<dbReference type="InterPro" id="IPR000795">
    <property type="entry name" value="T_Tr_GTP-bd_dom"/>
</dbReference>
<dbReference type="InterPro" id="IPR000178">
    <property type="entry name" value="TF_IF2_bacterial-like"/>
</dbReference>
<dbReference type="InterPro" id="IPR015760">
    <property type="entry name" value="TIF_IF2"/>
</dbReference>
<dbReference type="InterPro" id="IPR023115">
    <property type="entry name" value="TIF_IF2_dom3"/>
</dbReference>
<dbReference type="InterPro" id="IPR036925">
    <property type="entry name" value="TIF_IF2_dom3_sf"/>
</dbReference>
<dbReference type="InterPro" id="IPR009000">
    <property type="entry name" value="Transl_B-barrel_sf"/>
</dbReference>
<dbReference type="NCBIfam" id="TIGR00487">
    <property type="entry name" value="IF-2"/>
    <property type="match status" value="1"/>
</dbReference>
<dbReference type="NCBIfam" id="TIGR00231">
    <property type="entry name" value="small_GTP"/>
    <property type="match status" value="1"/>
</dbReference>
<dbReference type="PANTHER" id="PTHR43381:SF5">
    <property type="entry name" value="TR-TYPE G DOMAIN-CONTAINING PROTEIN"/>
    <property type="match status" value="1"/>
</dbReference>
<dbReference type="PANTHER" id="PTHR43381">
    <property type="entry name" value="TRANSLATION INITIATION FACTOR IF-2-RELATED"/>
    <property type="match status" value="1"/>
</dbReference>
<dbReference type="Pfam" id="PF22042">
    <property type="entry name" value="EF-G_D2"/>
    <property type="match status" value="1"/>
</dbReference>
<dbReference type="Pfam" id="PF00009">
    <property type="entry name" value="GTP_EFTU"/>
    <property type="match status" value="1"/>
</dbReference>
<dbReference type="Pfam" id="PF11987">
    <property type="entry name" value="IF-2"/>
    <property type="match status" value="1"/>
</dbReference>
<dbReference type="Pfam" id="PF04760">
    <property type="entry name" value="IF2_N"/>
    <property type="match status" value="1"/>
</dbReference>
<dbReference type="SUPFAM" id="SSF52156">
    <property type="entry name" value="Initiation factor IF2/eIF5b, domain 3"/>
    <property type="match status" value="1"/>
</dbReference>
<dbReference type="SUPFAM" id="SSF52540">
    <property type="entry name" value="P-loop containing nucleoside triphosphate hydrolases"/>
    <property type="match status" value="1"/>
</dbReference>
<dbReference type="SUPFAM" id="SSF50447">
    <property type="entry name" value="Translation proteins"/>
    <property type="match status" value="2"/>
</dbReference>
<dbReference type="PROSITE" id="PS51722">
    <property type="entry name" value="G_TR_2"/>
    <property type="match status" value="1"/>
</dbReference>
<dbReference type="PROSITE" id="PS01176">
    <property type="entry name" value="IF2"/>
    <property type="match status" value="1"/>
</dbReference>
<name>IF2_EHRRG</name>
<comment type="function">
    <text evidence="2">One of the essential components for the initiation of protein synthesis. Protects formylmethionyl-tRNA from spontaneous hydrolysis and promotes its binding to the 30S ribosomal subunits. Also involved in the hydrolysis of GTP during the formation of the 70S ribosomal complex.</text>
</comment>
<comment type="subcellular location">
    <subcellularLocation>
        <location evidence="2">Cytoplasm</location>
    </subcellularLocation>
</comment>
<comment type="similarity">
    <text evidence="2">Belongs to the TRAFAC class translation factor GTPase superfamily. Classic translation factor GTPase family. IF-2 subfamily.</text>
</comment>
<feature type="chain" id="PRO_0000228195" description="Translation initiation factor IF-2">
    <location>
        <begin position="1"/>
        <end position="856"/>
    </location>
</feature>
<feature type="domain" description="tr-type G">
    <location>
        <begin position="356"/>
        <end position="526"/>
    </location>
</feature>
<feature type="region of interest" description="G1" evidence="1">
    <location>
        <begin position="365"/>
        <end position="372"/>
    </location>
</feature>
<feature type="region of interest" description="G2" evidence="1">
    <location>
        <begin position="390"/>
        <end position="394"/>
    </location>
</feature>
<feature type="region of interest" description="G3" evidence="1">
    <location>
        <begin position="412"/>
        <end position="415"/>
    </location>
</feature>
<feature type="region of interest" description="G4" evidence="1">
    <location>
        <begin position="466"/>
        <end position="469"/>
    </location>
</feature>
<feature type="region of interest" description="G5" evidence="1">
    <location>
        <begin position="502"/>
        <end position="504"/>
    </location>
</feature>
<feature type="binding site" evidence="2">
    <location>
        <begin position="365"/>
        <end position="372"/>
    </location>
    <ligand>
        <name>GTP</name>
        <dbReference type="ChEBI" id="CHEBI:37565"/>
    </ligand>
</feature>
<feature type="binding site" evidence="2">
    <location>
        <begin position="412"/>
        <end position="416"/>
    </location>
    <ligand>
        <name>GTP</name>
        <dbReference type="ChEBI" id="CHEBI:37565"/>
    </ligand>
</feature>
<feature type="binding site" evidence="2">
    <location>
        <begin position="466"/>
        <end position="469"/>
    </location>
    <ligand>
        <name>GTP</name>
        <dbReference type="ChEBI" id="CHEBI:37565"/>
    </ligand>
</feature>
<sequence>MNESKSVASNELTSGKVERTTLKLSDKLKISSNIQQGNKFSLNKSITTVEVRKSKKRKNIDEAARSSLLLQNNDIDGNSEDKNSLTIQEQISRMNALQNASNNEKREELSSDSNKHIEEEVISVKAEVEQPVDVVLPNDNLLIESDSSEKVIVDPVTDSEHADKDVQDVVMLDEFVSSNLDDAGDQKNGDQSDDISDLLEHKGIEGKKLKKYEKEHEEKKGNPKKVMSNNTYTKHVKLVIEEELEEDNNKQVIKNYRSKKNRVTNRSVKNKITRKVLIPNKITVQELANSMSERVKDVQQVLYQITGKHDIKLTDYLDSDQASIIVEAFNHTFKLVDNAKLENDLYSDGNNMELIPRAPVVTVMGHVDHGKTSLLDAIRESNVVDGEFKGITQHIGAYQITLNGDKKITFIDTPGHEAFAAMRAHGTNVTDIVVLVVAADDGIMPQTIESINHVKAANVAMIVAVNKIDKHDADLDRITNALLQHGVVAESLGGDVIVVPVSAKEKINLDQLKSSILLIADLLELKAVYNTRASGTVIESKVDKNCGVVATLIVQKGTLKVGDIIVAGNQAYGRVRNMFNADGGSEKVAIPSMPVKVFGLNNVPNFGTSFIVVDSEKQARELINYRQDLLNVELSKQPAIDKSNVLLYDMVDELNVILKCDVMGSIEAICYSIGKITHKDIRVNILYKGVGNITKSDVLLAETSNSIILAFNVKTDTQVKELAKQKNIEIKHYFVIYDIIDDIKKILTGMLKPLKQEVQIGTLSVRKVFSVGNNGSVLGCYVTSGLVKKGALVKLVRNNNIIHEGKIKVLRRFKDDVKEVTAGFECGILLDYSKEIYPESDVMNIFEIVEEIRVIQ</sequence>
<reference key="1">
    <citation type="journal article" date="2006" name="J. Bacteriol.">
        <title>Comparative genomic analysis of three strains of Ehrlichia ruminantium reveals an active process of genome size plasticity.</title>
        <authorList>
            <person name="Frutos R."/>
            <person name="Viari A."/>
            <person name="Ferraz C."/>
            <person name="Morgat A."/>
            <person name="Eychenie S."/>
            <person name="Kandassamy Y."/>
            <person name="Chantal I."/>
            <person name="Bensaid A."/>
            <person name="Coissac E."/>
            <person name="Vachiery N."/>
            <person name="Demaille J."/>
            <person name="Martinez D."/>
        </authorList>
    </citation>
    <scope>NUCLEOTIDE SEQUENCE [LARGE SCALE GENOMIC DNA]</scope>
    <source>
        <strain>Gardel</strain>
    </source>
</reference>
<evidence type="ECO:0000250" key="1"/>
<evidence type="ECO:0000255" key="2">
    <source>
        <dbReference type="HAMAP-Rule" id="MF_00100"/>
    </source>
</evidence>
<accession>Q5FGX3</accession>
<gene>
    <name evidence="2" type="primary">infB</name>
    <name type="ordered locus">ERGA_CDS_04810</name>
</gene>